<accession>Q9XP86</accession>
<comment type="function">
    <text evidence="2">Component of the ubiquinol-cytochrome c reductase complex (complex III or cytochrome b-c1 complex) that is part of the mitochondrial respiratory chain. The b-c1 complex mediates electron transfer from ubiquinol to cytochrome c. Contributes to the generation of a proton gradient across the mitochondrial membrane that is then used for ATP synthesis.</text>
</comment>
<comment type="cofactor">
    <cofactor evidence="2">
        <name>heme b</name>
        <dbReference type="ChEBI" id="CHEBI:60344"/>
    </cofactor>
    <text evidence="2">Binds 2 heme b groups non-covalently.</text>
</comment>
<comment type="subunit">
    <text evidence="2">The cytochrome bc1 complex contains 11 subunits: 3 respiratory subunits (MT-CYB, CYC1 and UQCRFS1), 2 core proteins (UQCRC1 and UQCRC2) and 6 low-molecular weight proteins (UQCRH/QCR6, UQCRB/QCR7, UQCRQ/QCR8, UQCR10/QCR9, UQCR11/QCR10 and a cleavage product of UQCRFS1). This cytochrome bc1 complex then forms a dimer.</text>
</comment>
<comment type="subcellular location">
    <subcellularLocation>
        <location evidence="2">Mitochondrion inner membrane</location>
        <topology evidence="2">Multi-pass membrane protein</topology>
    </subcellularLocation>
</comment>
<comment type="miscellaneous">
    <text evidence="1">Heme 1 (or BL or b562) is low-potential and absorbs at about 562 nm, and heme 2 (or BH or b566) is high-potential and absorbs at about 566 nm.</text>
</comment>
<comment type="similarity">
    <text evidence="3 4">Belongs to the cytochrome b family.</text>
</comment>
<comment type="caution">
    <text evidence="2">The full-length protein contains only eight transmembrane helices, not nine as predicted by bioinformatics tools.</text>
</comment>
<protein>
    <recommendedName>
        <fullName>Cytochrome b</fullName>
    </recommendedName>
    <alternativeName>
        <fullName>Complex III subunit 3</fullName>
    </alternativeName>
    <alternativeName>
        <fullName>Complex III subunit III</fullName>
    </alternativeName>
    <alternativeName>
        <fullName>Cytochrome b-c1 complex subunit 3</fullName>
    </alternativeName>
    <alternativeName>
        <fullName>Ubiquinol-cytochrome-c reductase complex cytochrome b subunit</fullName>
    </alternativeName>
</protein>
<organism>
    <name type="scientific">Sminthopsis dolichura</name>
    <name type="common">Little long-tailed dunnart</name>
    <dbReference type="NCBI Taxonomy" id="75754"/>
    <lineage>
        <taxon>Eukaryota</taxon>
        <taxon>Metazoa</taxon>
        <taxon>Chordata</taxon>
        <taxon>Craniata</taxon>
        <taxon>Vertebrata</taxon>
        <taxon>Euteleostomi</taxon>
        <taxon>Mammalia</taxon>
        <taxon>Metatheria</taxon>
        <taxon>Dasyuromorphia</taxon>
        <taxon>Dasyuridae</taxon>
        <taxon>Sminthopsis</taxon>
    </lineage>
</organism>
<keyword id="KW-0249">Electron transport</keyword>
<keyword id="KW-0349">Heme</keyword>
<keyword id="KW-0408">Iron</keyword>
<keyword id="KW-0472">Membrane</keyword>
<keyword id="KW-0479">Metal-binding</keyword>
<keyword id="KW-0496">Mitochondrion</keyword>
<keyword id="KW-0999">Mitochondrion inner membrane</keyword>
<keyword id="KW-0679">Respiratory chain</keyword>
<keyword id="KW-0812">Transmembrane</keyword>
<keyword id="KW-1133">Transmembrane helix</keyword>
<keyword id="KW-0813">Transport</keyword>
<keyword id="KW-0830">Ubiquinone</keyword>
<proteinExistence type="inferred from homology"/>
<evidence type="ECO:0000250" key="1"/>
<evidence type="ECO:0000250" key="2">
    <source>
        <dbReference type="UniProtKB" id="P00157"/>
    </source>
</evidence>
<evidence type="ECO:0000255" key="3">
    <source>
        <dbReference type="PROSITE-ProRule" id="PRU00967"/>
    </source>
</evidence>
<evidence type="ECO:0000255" key="4">
    <source>
        <dbReference type="PROSITE-ProRule" id="PRU00968"/>
    </source>
</evidence>
<geneLocation type="mitochondrion"/>
<name>CYB_SMIDL</name>
<reference key="1">
    <citation type="journal article" date="1999" name="Mol. Phylogenet. Evol.">
        <title>Systematic relationships within the dasyurid marsupial tribe Sminthopsini -- a multigene approach.</title>
        <authorList>
            <person name="Blacket M.J."/>
            <person name="Krajewski C."/>
            <person name="Labrinidis A."/>
            <person name="Cambron B."/>
            <person name="Cooper S."/>
            <person name="Westerman M."/>
        </authorList>
    </citation>
    <scope>NUCLEOTIDE SEQUENCE [GENOMIC DNA]</scope>
</reference>
<dbReference type="EMBL" id="AF088922">
    <property type="protein sequence ID" value="AAD38432.1"/>
    <property type="molecule type" value="Genomic_DNA"/>
</dbReference>
<dbReference type="SMR" id="Q9XP86"/>
<dbReference type="GO" id="GO:0005743">
    <property type="term" value="C:mitochondrial inner membrane"/>
    <property type="evidence" value="ECO:0007669"/>
    <property type="project" value="UniProtKB-SubCell"/>
</dbReference>
<dbReference type="GO" id="GO:0045275">
    <property type="term" value="C:respiratory chain complex III"/>
    <property type="evidence" value="ECO:0007669"/>
    <property type="project" value="InterPro"/>
</dbReference>
<dbReference type="GO" id="GO:0046872">
    <property type="term" value="F:metal ion binding"/>
    <property type="evidence" value="ECO:0007669"/>
    <property type="project" value="UniProtKB-KW"/>
</dbReference>
<dbReference type="GO" id="GO:0008121">
    <property type="term" value="F:ubiquinol-cytochrome-c reductase activity"/>
    <property type="evidence" value="ECO:0007669"/>
    <property type="project" value="InterPro"/>
</dbReference>
<dbReference type="GO" id="GO:0006122">
    <property type="term" value="P:mitochondrial electron transport, ubiquinol to cytochrome c"/>
    <property type="evidence" value="ECO:0007669"/>
    <property type="project" value="TreeGrafter"/>
</dbReference>
<dbReference type="CDD" id="cd00290">
    <property type="entry name" value="cytochrome_b_C"/>
    <property type="match status" value="1"/>
</dbReference>
<dbReference type="CDD" id="cd00284">
    <property type="entry name" value="Cytochrome_b_N"/>
    <property type="match status" value="1"/>
</dbReference>
<dbReference type="FunFam" id="1.20.810.10:FF:000002">
    <property type="entry name" value="Cytochrome b"/>
    <property type="match status" value="1"/>
</dbReference>
<dbReference type="Gene3D" id="1.20.810.10">
    <property type="entry name" value="Cytochrome Bc1 Complex, Chain C"/>
    <property type="match status" value="1"/>
</dbReference>
<dbReference type="InterPro" id="IPR005798">
    <property type="entry name" value="Cyt_b/b6_C"/>
</dbReference>
<dbReference type="InterPro" id="IPR036150">
    <property type="entry name" value="Cyt_b/b6_C_sf"/>
</dbReference>
<dbReference type="InterPro" id="IPR005797">
    <property type="entry name" value="Cyt_b/b6_N"/>
</dbReference>
<dbReference type="InterPro" id="IPR027387">
    <property type="entry name" value="Cytb/b6-like_sf"/>
</dbReference>
<dbReference type="InterPro" id="IPR030689">
    <property type="entry name" value="Cytochrome_b"/>
</dbReference>
<dbReference type="InterPro" id="IPR048260">
    <property type="entry name" value="Cytochrome_b_C_euk/bac"/>
</dbReference>
<dbReference type="InterPro" id="IPR048259">
    <property type="entry name" value="Cytochrome_b_N_euk/bac"/>
</dbReference>
<dbReference type="InterPro" id="IPR016174">
    <property type="entry name" value="Di-haem_cyt_TM"/>
</dbReference>
<dbReference type="PANTHER" id="PTHR19271">
    <property type="entry name" value="CYTOCHROME B"/>
    <property type="match status" value="1"/>
</dbReference>
<dbReference type="PANTHER" id="PTHR19271:SF16">
    <property type="entry name" value="CYTOCHROME B"/>
    <property type="match status" value="1"/>
</dbReference>
<dbReference type="Pfam" id="PF00032">
    <property type="entry name" value="Cytochrom_B_C"/>
    <property type="match status" value="1"/>
</dbReference>
<dbReference type="Pfam" id="PF00033">
    <property type="entry name" value="Cytochrome_B"/>
    <property type="match status" value="1"/>
</dbReference>
<dbReference type="PIRSF" id="PIRSF038885">
    <property type="entry name" value="COB"/>
    <property type="match status" value="1"/>
</dbReference>
<dbReference type="SUPFAM" id="SSF81648">
    <property type="entry name" value="a domain/subunit of cytochrome bc1 complex (Ubiquinol-cytochrome c reductase)"/>
    <property type="match status" value="1"/>
</dbReference>
<dbReference type="SUPFAM" id="SSF81342">
    <property type="entry name" value="Transmembrane di-heme cytochromes"/>
    <property type="match status" value="1"/>
</dbReference>
<dbReference type="PROSITE" id="PS51003">
    <property type="entry name" value="CYTB_CTER"/>
    <property type="match status" value="1"/>
</dbReference>
<dbReference type="PROSITE" id="PS51002">
    <property type="entry name" value="CYTB_NTER"/>
    <property type="match status" value="1"/>
</dbReference>
<feature type="chain" id="PRO_0000254859" description="Cytochrome b">
    <location>
        <begin position="1"/>
        <end position="381"/>
    </location>
</feature>
<feature type="transmembrane region" description="Helical" evidence="2">
    <location>
        <begin position="33"/>
        <end position="53"/>
    </location>
</feature>
<feature type="transmembrane region" description="Helical" evidence="2">
    <location>
        <begin position="77"/>
        <end position="98"/>
    </location>
</feature>
<feature type="transmembrane region" description="Helical" evidence="2">
    <location>
        <begin position="113"/>
        <end position="133"/>
    </location>
</feature>
<feature type="transmembrane region" description="Helical" evidence="2">
    <location>
        <begin position="178"/>
        <end position="198"/>
    </location>
</feature>
<feature type="transmembrane region" description="Helical" evidence="2">
    <location>
        <begin position="226"/>
        <end position="246"/>
    </location>
</feature>
<feature type="transmembrane region" description="Helical" evidence="2">
    <location>
        <begin position="288"/>
        <end position="308"/>
    </location>
</feature>
<feature type="transmembrane region" description="Helical" evidence="2">
    <location>
        <begin position="320"/>
        <end position="340"/>
    </location>
</feature>
<feature type="transmembrane region" description="Helical" evidence="2">
    <location>
        <begin position="347"/>
        <end position="367"/>
    </location>
</feature>
<feature type="binding site" description="axial binding residue" evidence="2">
    <location>
        <position position="83"/>
    </location>
    <ligand>
        <name>heme b</name>
        <dbReference type="ChEBI" id="CHEBI:60344"/>
        <label>b562</label>
    </ligand>
    <ligandPart>
        <name>Fe</name>
        <dbReference type="ChEBI" id="CHEBI:18248"/>
    </ligandPart>
</feature>
<feature type="binding site" description="axial binding residue" evidence="2">
    <location>
        <position position="97"/>
    </location>
    <ligand>
        <name>heme b</name>
        <dbReference type="ChEBI" id="CHEBI:60344"/>
        <label>b566</label>
    </ligand>
    <ligandPart>
        <name>Fe</name>
        <dbReference type="ChEBI" id="CHEBI:18248"/>
    </ligandPart>
</feature>
<feature type="binding site" description="axial binding residue" evidence="2">
    <location>
        <position position="182"/>
    </location>
    <ligand>
        <name>heme b</name>
        <dbReference type="ChEBI" id="CHEBI:60344"/>
        <label>b562</label>
    </ligand>
    <ligandPart>
        <name>Fe</name>
        <dbReference type="ChEBI" id="CHEBI:18248"/>
    </ligandPart>
</feature>
<feature type="binding site" description="axial binding residue" evidence="2">
    <location>
        <position position="196"/>
    </location>
    <ligand>
        <name>heme b</name>
        <dbReference type="ChEBI" id="CHEBI:60344"/>
        <label>b566</label>
    </ligand>
    <ligandPart>
        <name>Fe</name>
        <dbReference type="ChEBI" id="CHEBI:18248"/>
    </ligandPart>
</feature>
<feature type="binding site" evidence="2">
    <location>
        <position position="201"/>
    </location>
    <ligand>
        <name>a ubiquinone</name>
        <dbReference type="ChEBI" id="CHEBI:16389"/>
    </ligand>
</feature>
<gene>
    <name type="primary">MT-CYB</name>
    <name type="synonym">COB</name>
    <name type="synonym">CYTB</name>
    <name type="synonym">MTCYB</name>
</gene>
<sequence>MINLRKTHPLMKIINHSFIDLPAPSNISAWWNFGSLLGICLVIQILTGLFLAMHYTSDTLTAFSSVAHICRDVNYGWLIRNLHANGTSMFFMCLFLHVGRGIYYGSYLYKETWNIGVILLLTVMATAFVGYVLPWGQMSFWGATVITNLLSAIPYIGTTLAEWIWGGFAVDKATLTRFFAFHFILPFIIMALVIVHLLFLHETGSNNPSGINPDSDKIPFHPYYTIKDALGLMFLLLILLSLAFFSPDSLGDPDNFSPANPLNTPPHIKPEWYFLFAYAILRSIPNKLGGVLALLASILILLIIPFLHTANQRSMMFRPISQTLFWILTANLITLTWIGGQPVEQPFIIIGQLASILYFTLILILLPLAGLFENYMLEPQR</sequence>